<reference key="1">
    <citation type="journal article" date="2008" name="PLoS ONE">
        <title>Genetic basis of virulence attenuation revealed by comparative genomic analysis of Mycobacterium tuberculosis strain H37Ra versus H37Rv.</title>
        <authorList>
            <person name="Zheng H."/>
            <person name="Lu L."/>
            <person name="Wang B."/>
            <person name="Pu S."/>
            <person name="Zhang X."/>
            <person name="Zhu G."/>
            <person name="Shi W."/>
            <person name="Zhang L."/>
            <person name="Wang H."/>
            <person name="Wang S."/>
            <person name="Zhao G."/>
            <person name="Zhang Y."/>
        </authorList>
    </citation>
    <scope>NUCLEOTIDE SEQUENCE [LARGE SCALE GENOMIC DNA]</scope>
    <source>
        <strain>ATCC 25177 / H37Ra</strain>
    </source>
</reference>
<name>KATG_MYCTA</name>
<accession>A5U3S7</accession>
<organism>
    <name type="scientific">Mycobacterium tuberculosis (strain ATCC 25177 / H37Ra)</name>
    <dbReference type="NCBI Taxonomy" id="419947"/>
    <lineage>
        <taxon>Bacteria</taxon>
        <taxon>Bacillati</taxon>
        <taxon>Actinomycetota</taxon>
        <taxon>Actinomycetes</taxon>
        <taxon>Mycobacteriales</taxon>
        <taxon>Mycobacteriaceae</taxon>
        <taxon>Mycobacterium</taxon>
        <taxon>Mycobacterium tuberculosis complex</taxon>
    </lineage>
</organism>
<proteinExistence type="inferred from homology"/>
<sequence>MPEQHPPITETTTGAASNGCPVVGHMKYPVEGGGNQDWWPNRLNLKVLHQNPAVADPMGAAFDYAAEVATIDVDALTRDIEEVMTTSQPWWPADYGHYGPLFIRMAWHAAGTYRIHDGRGGAGGGMQRFAPLNSWPDNASLDKARRLLWPVKKKYGKKLSWADLIVFAGNCALESMGFKTFGFGFGRVDQWEPDEVYWGKEATWLGDERYSGKRDLENPLAAVQMGLIYVNPEGPNGNPDPMAAAVDIRETFRRMAMNDVETAALIVGGHTFGKTHGAGPADLVGPEPEAAPLEQMGLGWKSSYGTGTGKDAITSGIEVVWTNTPTKWDNSFLEILYGYEWELTKSPAGAWQYTAKDGAGAGTIPDPFGGPGRSPTMLATDLSLRVDPIYERITRRWLEHPEELADEFAKAWYKLIHRDMGPVARYLGPLVPKQTLLWQDPVPAVSHDLVGEAEIASLKSQIRASGLTVSQLVSTAWAAASSFRGSDKRGGANGGRIRLQPQVGWEVNDPDGDLRKVIRTLEEIQESFNSAAPGNIKVSFADLVVLGGCAAIEKAAKAAGHNITVPFTPGRTDASQEQTDVESFAVLEPKADGFRNYLGKGNPLPAEYMLLDKANLLTLSAPEMTVLVGGLRVLGANYKRLPLGVFTEASESLTNDFFVNLLDMGITWEPSPADDGTYQGKDGSGKVKWTGSRVDLVFGSNSELRALVEVYGADDAQPKFVQDFVAAWDKVMNLDRFDVR</sequence>
<protein>
    <recommendedName>
        <fullName evidence="2">Catalase-peroxidase</fullName>
        <shortName evidence="2">CP</shortName>
        <ecNumber evidence="2">1.11.1.21</ecNumber>
    </recommendedName>
    <alternativeName>
        <fullName evidence="2">Peroxidase/catalase</fullName>
    </alternativeName>
</protein>
<gene>
    <name evidence="2" type="primary">katG</name>
    <name type="ordered locus">MRA_1919</name>
</gene>
<evidence type="ECO:0000250" key="1">
    <source>
        <dbReference type="UniProtKB" id="P9WIE5"/>
    </source>
</evidence>
<evidence type="ECO:0000255" key="2">
    <source>
        <dbReference type="HAMAP-Rule" id="MF_01961"/>
    </source>
</evidence>
<feature type="chain" id="PRO_0000354844" description="Catalase-peroxidase">
    <location>
        <begin position="1"/>
        <end position="740"/>
    </location>
</feature>
<feature type="active site" description="Proton acceptor" evidence="2">
    <location>
        <position position="108"/>
    </location>
</feature>
<feature type="active site" description="Tryptophan radical intermediate" evidence="1">
    <location>
        <position position="321"/>
    </location>
</feature>
<feature type="binding site" description="axial binding residue" evidence="2">
    <location>
        <position position="270"/>
    </location>
    <ligand>
        <name>heme b</name>
        <dbReference type="ChEBI" id="CHEBI:60344"/>
    </ligand>
    <ligandPart>
        <name>Fe</name>
        <dbReference type="ChEBI" id="CHEBI:18248"/>
    </ligandPart>
</feature>
<feature type="site" description="Transition state stabilizer" evidence="2">
    <location>
        <position position="104"/>
    </location>
</feature>
<feature type="cross-link" description="Tryptophyl-tyrosyl-methioninium (Trp-Tyr) (with M-255)" evidence="2">
    <location>
        <begin position="107"/>
        <end position="229"/>
    </location>
</feature>
<feature type="cross-link" description="Tryptophyl-tyrosyl-methioninium (Tyr-Met) (with W-107)" evidence="2">
    <location>
        <begin position="229"/>
        <end position="255"/>
    </location>
</feature>
<comment type="function">
    <text evidence="2">Bifunctional enzyme with both catalase and broad-spectrum peroxidase activity.</text>
</comment>
<comment type="catalytic activity">
    <reaction evidence="2">
        <text>H2O2 + AH2 = A + 2 H2O</text>
        <dbReference type="Rhea" id="RHEA:30275"/>
        <dbReference type="ChEBI" id="CHEBI:13193"/>
        <dbReference type="ChEBI" id="CHEBI:15377"/>
        <dbReference type="ChEBI" id="CHEBI:16240"/>
        <dbReference type="ChEBI" id="CHEBI:17499"/>
        <dbReference type="EC" id="1.11.1.21"/>
    </reaction>
</comment>
<comment type="catalytic activity">
    <reaction evidence="2">
        <text>2 H2O2 = O2 + 2 H2O</text>
        <dbReference type="Rhea" id="RHEA:20309"/>
        <dbReference type="ChEBI" id="CHEBI:15377"/>
        <dbReference type="ChEBI" id="CHEBI:15379"/>
        <dbReference type="ChEBI" id="CHEBI:16240"/>
        <dbReference type="EC" id="1.11.1.21"/>
    </reaction>
</comment>
<comment type="cofactor">
    <cofactor evidence="2">
        <name>heme b</name>
        <dbReference type="ChEBI" id="CHEBI:60344"/>
    </cofactor>
    <text evidence="2">Binds 1 heme b (iron(II)-protoporphyrin IX) group per dimer.</text>
</comment>
<comment type="subunit">
    <text evidence="1">Homodimer.</text>
</comment>
<comment type="PTM">
    <text evidence="2">Formation of the three residue Trp-Tyr-Met cross-link is important for the catalase, but not the peroxidase activity of the enzyme.</text>
</comment>
<comment type="similarity">
    <text evidence="2">Belongs to the peroxidase family. Peroxidase/catalase subfamily.</text>
</comment>
<dbReference type="EC" id="1.11.1.21" evidence="2"/>
<dbReference type="EMBL" id="CP000611">
    <property type="protein sequence ID" value="ABQ73677.1"/>
    <property type="molecule type" value="Genomic_DNA"/>
</dbReference>
<dbReference type="RefSeq" id="WP_003899075.1">
    <property type="nucleotide sequence ID" value="NZ_CP016972.1"/>
</dbReference>
<dbReference type="SMR" id="A5U3S7"/>
<dbReference type="KEGG" id="mra:MRA_1919"/>
<dbReference type="eggNOG" id="COG0376">
    <property type="taxonomic scope" value="Bacteria"/>
</dbReference>
<dbReference type="HOGENOM" id="CLU_025424_2_0_11"/>
<dbReference type="Proteomes" id="UP000001988">
    <property type="component" value="Chromosome"/>
</dbReference>
<dbReference type="GO" id="GO:0005829">
    <property type="term" value="C:cytosol"/>
    <property type="evidence" value="ECO:0007669"/>
    <property type="project" value="TreeGrafter"/>
</dbReference>
<dbReference type="GO" id="GO:0004096">
    <property type="term" value="F:catalase activity"/>
    <property type="evidence" value="ECO:0007669"/>
    <property type="project" value="UniProtKB-UniRule"/>
</dbReference>
<dbReference type="GO" id="GO:0020037">
    <property type="term" value="F:heme binding"/>
    <property type="evidence" value="ECO:0007669"/>
    <property type="project" value="InterPro"/>
</dbReference>
<dbReference type="GO" id="GO:0046872">
    <property type="term" value="F:metal ion binding"/>
    <property type="evidence" value="ECO:0007669"/>
    <property type="project" value="UniProtKB-KW"/>
</dbReference>
<dbReference type="GO" id="GO:0070301">
    <property type="term" value="P:cellular response to hydrogen peroxide"/>
    <property type="evidence" value="ECO:0007669"/>
    <property type="project" value="TreeGrafter"/>
</dbReference>
<dbReference type="GO" id="GO:0042744">
    <property type="term" value="P:hydrogen peroxide catabolic process"/>
    <property type="evidence" value="ECO:0007669"/>
    <property type="project" value="UniProtKB-KW"/>
</dbReference>
<dbReference type="CDD" id="cd00649">
    <property type="entry name" value="catalase_peroxidase_1"/>
    <property type="match status" value="1"/>
</dbReference>
<dbReference type="CDD" id="cd08200">
    <property type="entry name" value="catalase_peroxidase_2"/>
    <property type="match status" value="1"/>
</dbReference>
<dbReference type="FunFam" id="1.10.420.10:FF:000002">
    <property type="entry name" value="Catalase-peroxidase"/>
    <property type="match status" value="1"/>
</dbReference>
<dbReference type="FunFam" id="1.10.420.10:FF:000004">
    <property type="entry name" value="Catalase-peroxidase"/>
    <property type="match status" value="1"/>
</dbReference>
<dbReference type="FunFam" id="1.10.520.10:FF:000002">
    <property type="entry name" value="Catalase-peroxidase"/>
    <property type="match status" value="1"/>
</dbReference>
<dbReference type="Gene3D" id="1.10.520.10">
    <property type="match status" value="2"/>
</dbReference>
<dbReference type="Gene3D" id="1.10.420.10">
    <property type="entry name" value="Peroxidase, domain 2"/>
    <property type="match status" value="2"/>
</dbReference>
<dbReference type="HAMAP" id="MF_01961">
    <property type="entry name" value="Catal_peroxid"/>
    <property type="match status" value="1"/>
</dbReference>
<dbReference type="InterPro" id="IPR000763">
    <property type="entry name" value="Catalase_peroxidase"/>
</dbReference>
<dbReference type="InterPro" id="IPR002016">
    <property type="entry name" value="Haem_peroxidase"/>
</dbReference>
<dbReference type="InterPro" id="IPR010255">
    <property type="entry name" value="Haem_peroxidase_sf"/>
</dbReference>
<dbReference type="InterPro" id="IPR019794">
    <property type="entry name" value="Peroxidases_AS"/>
</dbReference>
<dbReference type="InterPro" id="IPR019793">
    <property type="entry name" value="Peroxidases_heam-ligand_BS"/>
</dbReference>
<dbReference type="NCBIfam" id="TIGR00198">
    <property type="entry name" value="cat_per_HPI"/>
    <property type="match status" value="1"/>
</dbReference>
<dbReference type="NCBIfam" id="NF011635">
    <property type="entry name" value="PRK15061.1"/>
    <property type="match status" value="1"/>
</dbReference>
<dbReference type="PANTHER" id="PTHR30555:SF0">
    <property type="entry name" value="CATALASE-PEROXIDASE"/>
    <property type="match status" value="1"/>
</dbReference>
<dbReference type="PANTHER" id="PTHR30555">
    <property type="entry name" value="HYDROPEROXIDASE I, BIFUNCTIONAL CATALASE-PEROXIDASE"/>
    <property type="match status" value="1"/>
</dbReference>
<dbReference type="Pfam" id="PF00141">
    <property type="entry name" value="peroxidase"/>
    <property type="match status" value="2"/>
</dbReference>
<dbReference type="PRINTS" id="PR00460">
    <property type="entry name" value="BPEROXIDASE"/>
</dbReference>
<dbReference type="PRINTS" id="PR00458">
    <property type="entry name" value="PEROXIDASE"/>
</dbReference>
<dbReference type="SUPFAM" id="SSF48113">
    <property type="entry name" value="Heme-dependent peroxidases"/>
    <property type="match status" value="2"/>
</dbReference>
<dbReference type="PROSITE" id="PS00435">
    <property type="entry name" value="PEROXIDASE_1"/>
    <property type="match status" value="1"/>
</dbReference>
<dbReference type="PROSITE" id="PS00436">
    <property type="entry name" value="PEROXIDASE_2"/>
    <property type="match status" value="1"/>
</dbReference>
<dbReference type="PROSITE" id="PS50873">
    <property type="entry name" value="PEROXIDASE_4"/>
    <property type="match status" value="1"/>
</dbReference>
<keyword id="KW-0349">Heme</keyword>
<keyword id="KW-0376">Hydrogen peroxide</keyword>
<keyword id="KW-0408">Iron</keyword>
<keyword id="KW-0479">Metal-binding</keyword>
<keyword id="KW-0556">Organic radical</keyword>
<keyword id="KW-0560">Oxidoreductase</keyword>
<keyword id="KW-0575">Peroxidase</keyword>
<keyword id="KW-1185">Reference proteome</keyword>